<comment type="function">
    <text evidence="1">DNA-dependent RNA polymerase catalyzes the transcription of DNA into RNA using the four ribonucleoside triphosphates as substrates. Specific component of RNA polymerase III which synthesizes small RNAs, such as 5S rRNA and tRNAs (By similarity).</text>
</comment>
<comment type="subunit">
    <text evidence="1">Component of the RNA polymerase III (Pol III) complex consisting of 17 subunits.</text>
</comment>
<comment type="subcellular location">
    <subcellularLocation>
        <location evidence="1">Nucleus</location>
    </subcellularLocation>
</comment>
<comment type="similarity">
    <text evidence="3">Belongs to the eukaryotic RPC4/POLR3D RNA polymerase subunit family.</text>
</comment>
<proteinExistence type="inferred from homology"/>
<keyword id="KW-0240">DNA-directed RNA polymerase</keyword>
<keyword id="KW-0539">Nucleus</keyword>
<keyword id="KW-1185">Reference proteome</keyword>
<keyword id="KW-0804">Transcription</keyword>
<reference key="1">
    <citation type="journal article" date="2002" name="Nature">
        <title>Sequence and analysis of chromosome 2 of Dictyostelium discoideum.</title>
        <authorList>
            <person name="Gloeckner G."/>
            <person name="Eichinger L."/>
            <person name="Szafranski K."/>
            <person name="Pachebat J.A."/>
            <person name="Bankier A.T."/>
            <person name="Dear P.H."/>
            <person name="Lehmann R."/>
            <person name="Baumgart C."/>
            <person name="Parra G."/>
            <person name="Abril J.F."/>
            <person name="Guigo R."/>
            <person name="Kumpf K."/>
            <person name="Tunggal B."/>
            <person name="Cox E.C."/>
            <person name="Quail M.A."/>
            <person name="Platzer M."/>
            <person name="Rosenthal A."/>
            <person name="Noegel A.A."/>
        </authorList>
    </citation>
    <scope>NUCLEOTIDE SEQUENCE [LARGE SCALE GENOMIC DNA]</scope>
    <source>
        <strain>AX4</strain>
    </source>
</reference>
<reference key="2">
    <citation type="journal article" date="2005" name="Nature">
        <title>The genome of the social amoeba Dictyostelium discoideum.</title>
        <authorList>
            <person name="Eichinger L."/>
            <person name="Pachebat J.A."/>
            <person name="Gloeckner G."/>
            <person name="Rajandream M.A."/>
            <person name="Sucgang R."/>
            <person name="Berriman M."/>
            <person name="Song J."/>
            <person name="Olsen R."/>
            <person name="Szafranski K."/>
            <person name="Xu Q."/>
            <person name="Tunggal B."/>
            <person name="Kummerfeld S."/>
            <person name="Madera M."/>
            <person name="Konfortov B.A."/>
            <person name="Rivero F."/>
            <person name="Bankier A.T."/>
            <person name="Lehmann R."/>
            <person name="Hamlin N."/>
            <person name="Davies R."/>
            <person name="Gaudet P."/>
            <person name="Fey P."/>
            <person name="Pilcher K."/>
            <person name="Chen G."/>
            <person name="Saunders D."/>
            <person name="Sodergren E.J."/>
            <person name="Davis P."/>
            <person name="Kerhornou A."/>
            <person name="Nie X."/>
            <person name="Hall N."/>
            <person name="Anjard C."/>
            <person name="Hemphill L."/>
            <person name="Bason N."/>
            <person name="Farbrother P."/>
            <person name="Desany B."/>
            <person name="Just E."/>
            <person name="Morio T."/>
            <person name="Rost R."/>
            <person name="Churcher C.M."/>
            <person name="Cooper J."/>
            <person name="Haydock S."/>
            <person name="van Driessche N."/>
            <person name="Cronin A."/>
            <person name="Goodhead I."/>
            <person name="Muzny D.M."/>
            <person name="Mourier T."/>
            <person name="Pain A."/>
            <person name="Lu M."/>
            <person name="Harper D."/>
            <person name="Lindsay R."/>
            <person name="Hauser H."/>
            <person name="James K.D."/>
            <person name="Quiles M."/>
            <person name="Madan Babu M."/>
            <person name="Saito T."/>
            <person name="Buchrieser C."/>
            <person name="Wardroper A."/>
            <person name="Felder M."/>
            <person name="Thangavelu M."/>
            <person name="Johnson D."/>
            <person name="Knights A."/>
            <person name="Loulseged H."/>
            <person name="Mungall K.L."/>
            <person name="Oliver K."/>
            <person name="Price C."/>
            <person name="Quail M.A."/>
            <person name="Urushihara H."/>
            <person name="Hernandez J."/>
            <person name="Rabbinowitsch E."/>
            <person name="Steffen D."/>
            <person name="Sanders M."/>
            <person name="Ma J."/>
            <person name="Kohara Y."/>
            <person name="Sharp S."/>
            <person name="Simmonds M.N."/>
            <person name="Spiegler S."/>
            <person name="Tivey A."/>
            <person name="Sugano S."/>
            <person name="White B."/>
            <person name="Walker D."/>
            <person name="Woodward J.R."/>
            <person name="Winckler T."/>
            <person name="Tanaka Y."/>
            <person name="Shaulsky G."/>
            <person name="Schleicher M."/>
            <person name="Weinstock G.M."/>
            <person name="Rosenthal A."/>
            <person name="Cox E.C."/>
            <person name="Chisholm R.L."/>
            <person name="Gibbs R.A."/>
            <person name="Loomis W.F."/>
            <person name="Platzer M."/>
            <person name="Kay R.R."/>
            <person name="Williams J.G."/>
            <person name="Dear P.H."/>
            <person name="Noegel A.A."/>
            <person name="Barrell B.G."/>
            <person name="Kuspa A."/>
        </authorList>
    </citation>
    <scope>NUCLEOTIDE SEQUENCE [LARGE SCALE GENOMIC DNA]</scope>
    <source>
        <strain>AX4</strain>
    </source>
</reference>
<name>RPC4_DICDI</name>
<feature type="chain" id="PRO_0000330757" description="DNA-directed RNA polymerase III subunit rpc4">
    <location>
        <begin position="1"/>
        <end position="430"/>
    </location>
</feature>
<feature type="region of interest" description="Disordered" evidence="2">
    <location>
        <begin position="1"/>
        <end position="108"/>
    </location>
</feature>
<feature type="region of interest" description="Disordered" evidence="2">
    <location>
        <begin position="218"/>
        <end position="240"/>
    </location>
</feature>
<feature type="region of interest" description="Disordered" evidence="2">
    <location>
        <begin position="283"/>
        <end position="313"/>
    </location>
</feature>
<feature type="compositionally biased region" description="Pro residues" evidence="2">
    <location>
        <begin position="1"/>
        <end position="10"/>
    </location>
</feature>
<feature type="compositionally biased region" description="Low complexity" evidence="2">
    <location>
        <begin position="35"/>
        <end position="44"/>
    </location>
</feature>
<feature type="compositionally biased region" description="Polar residues" evidence="2">
    <location>
        <begin position="93"/>
        <end position="106"/>
    </location>
</feature>
<feature type="compositionally biased region" description="Low complexity" evidence="2">
    <location>
        <begin position="296"/>
        <end position="313"/>
    </location>
</feature>
<organism>
    <name type="scientific">Dictyostelium discoideum</name>
    <name type="common">Social amoeba</name>
    <dbReference type="NCBI Taxonomy" id="44689"/>
    <lineage>
        <taxon>Eukaryota</taxon>
        <taxon>Amoebozoa</taxon>
        <taxon>Evosea</taxon>
        <taxon>Eumycetozoa</taxon>
        <taxon>Dictyostelia</taxon>
        <taxon>Dictyosteliales</taxon>
        <taxon>Dictyosteliaceae</taxon>
        <taxon>Dictyostelium</taxon>
    </lineage>
</organism>
<accession>Q8T1V7</accession>
<accession>Q54ZC1</accession>
<gene>
    <name type="primary">polr3d</name>
    <name type="synonym">rpc4</name>
    <name type="ORF">DDB_G0277671</name>
</gene>
<evidence type="ECO:0000250" key="1"/>
<evidence type="ECO:0000256" key="2">
    <source>
        <dbReference type="SAM" id="MobiDB-lite"/>
    </source>
</evidence>
<evidence type="ECO:0000305" key="3"/>
<dbReference type="EMBL" id="AAFI02000020">
    <property type="protein sequence ID" value="EAL68653.1"/>
    <property type="molecule type" value="Genomic_DNA"/>
</dbReference>
<dbReference type="RefSeq" id="XP_642576.1">
    <property type="nucleotide sequence ID" value="XM_637484.1"/>
</dbReference>
<dbReference type="STRING" id="44689.Q8T1V7"/>
<dbReference type="PaxDb" id="44689-DDB0220005"/>
<dbReference type="EnsemblProtists" id="EAL68653">
    <property type="protein sequence ID" value="EAL68653"/>
    <property type="gene ID" value="DDB_G0277671"/>
</dbReference>
<dbReference type="GeneID" id="8621139"/>
<dbReference type="KEGG" id="ddi:DDB_G0277671"/>
<dbReference type="dictyBase" id="DDB_G0277671">
    <property type="gene designation" value="rpc4"/>
</dbReference>
<dbReference type="VEuPathDB" id="AmoebaDB:DDB_G0277671"/>
<dbReference type="HOGENOM" id="CLU_638457_0_0_1"/>
<dbReference type="InParanoid" id="Q8T1V7"/>
<dbReference type="OMA" id="HEMEIDP"/>
<dbReference type="Reactome" id="R-DDI-76061">
    <property type="pathway name" value="RNA Polymerase III Transcription Initiation From Type 1 Promoter"/>
</dbReference>
<dbReference type="Reactome" id="R-DDI-76066">
    <property type="pathway name" value="RNA Polymerase III Transcription Initiation From Type 2 Promoter"/>
</dbReference>
<dbReference type="PRO" id="PR:Q8T1V7"/>
<dbReference type="Proteomes" id="UP000002195">
    <property type="component" value="Chromosome 2"/>
</dbReference>
<dbReference type="GO" id="GO:0005666">
    <property type="term" value="C:RNA polymerase III complex"/>
    <property type="evidence" value="ECO:0000250"/>
    <property type="project" value="dictyBase"/>
</dbReference>
<dbReference type="GO" id="GO:0003677">
    <property type="term" value="F:DNA binding"/>
    <property type="evidence" value="ECO:0007669"/>
    <property type="project" value="InterPro"/>
</dbReference>
<dbReference type="GO" id="GO:0003899">
    <property type="term" value="F:DNA-directed RNA polymerase activity"/>
    <property type="evidence" value="ECO:0000250"/>
    <property type="project" value="dictyBase"/>
</dbReference>
<dbReference type="GO" id="GO:0006383">
    <property type="term" value="P:transcription by RNA polymerase III"/>
    <property type="evidence" value="ECO:0000250"/>
    <property type="project" value="dictyBase"/>
</dbReference>
<dbReference type="GO" id="GO:0042797">
    <property type="term" value="P:tRNA transcription by RNA polymerase III"/>
    <property type="evidence" value="ECO:0000318"/>
    <property type="project" value="GO_Central"/>
</dbReference>
<dbReference type="InterPro" id="IPR007811">
    <property type="entry name" value="RPC4"/>
</dbReference>
<dbReference type="PANTHER" id="PTHR13408">
    <property type="entry name" value="DNA-DIRECTED RNA POLYMERASE III"/>
    <property type="match status" value="1"/>
</dbReference>
<dbReference type="PANTHER" id="PTHR13408:SF0">
    <property type="entry name" value="DNA-DIRECTED RNA POLYMERASE III SUBUNIT RPC4"/>
    <property type="match status" value="1"/>
</dbReference>
<dbReference type="Pfam" id="PF05132">
    <property type="entry name" value="RNA_pol_Rpc4"/>
    <property type="match status" value="1"/>
</dbReference>
<protein>
    <recommendedName>
        <fullName>DNA-directed RNA polymerase III subunit rpc4</fullName>
        <shortName>RNA polymerase III subunit C4</shortName>
    </recommendedName>
    <alternativeName>
        <fullName>DNA-directed RNA polymerase III subunit D</fullName>
    </alternativeName>
</protein>
<sequence>MSEPPQPPGKPSANAPKPAPRLKSIKPTTPGDANKITTPTIPSIKTKKEFKPNIPTARKKKDEKDPLSGAISDLISASLSPLAVVGDRPGKPNATSSGKFRSNLNPNRKKPAAIPITNLFQTPLVQAETQQPQSTYEMNKKNEKKDSDLLAQLFHEMEVDPMQPFHPTHLPLVDPRKIMKAYSLDDASKDLNETKRELEEKIKNGELSDTTNFTLNSIGSEDNNNNGGGSGQVKFVESSKKKNKEISTKDKPFYVEDQFLNKDKLFFIQLPNLLPSTQSKPNFNIPNPVLPPPKPTTITKTVTNPDGSITTTTIPINENTKIEDQPPPPPKELDEKAFVPVIYPGDFPPSIKEMPSGKLGTLKIYKSGKSILKIGTVEYDISSGDKLKFLEEVQCFQTKGGPDNSPTCYTLGIPSQHLVAAPIISQISGI</sequence>